<feature type="chain" id="PRO_1000100842" description="Galactokinase">
    <location>
        <begin position="1"/>
        <end position="382"/>
    </location>
</feature>
<feature type="active site" description="Proton acceptor" evidence="1">
    <location>
        <position position="174"/>
    </location>
</feature>
<feature type="binding site" evidence="1">
    <location>
        <begin position="34"/>
        <end position="37"/>
    </location>
    <ligand>
        <name>substrate</name>
    </ligand>
</feature>
<feature type="binding site" evidence="1">
    <location>
        <begin position="124"/>
        <end position="130"/>
    </location>
    <ligand>
        <name>ATP</name>
        <dbReference type="ChEBI" id="CHEBI:30616"/>
    </ligand>
</feature>
<feature type="binding site" evidence="1">
    <location>
        <position position="130"/>
    </location>
    <ligand>
        <name>Mg(2+)</name>
        <dbReference type="ChEBI" id="CHEBI:18420"/>
    </ligand>
</feature>
<feature type="binding site" evidence="1">
    <location>
        <position position="162"/>
    </location>
    <ligand>
        <name>Mg(2+)</name>
        <dbReference type="ChEBI" id="CHEBI:18420"/>
    </ligand>
</feature>
<feature type="binding site" evidence="1">
    <location>
        <position position="223"/>
    </location>
    <ligand>
        <name>substrate</name>
    </ligand>
</feature>
<feature type="site" description="Transition state stabilizer" evidence="1">
    <location>
        <position position="28"/>
    </location>
</feature>
<evidence type="ECO:0000255" key="1">
    <source>
        <dbReference type="HAMAP-Rule" id="MF_00246"/>
    </source>
</evidence>
<keyword id="KW-0067">ATP-binding</keyword>
<keyword id="KW-0119">Carbohydrate metabolism</keyword>
<keyword id="KW-0963">Cytoplasm</keyword>
<keyword id="KW-0299">Galactose metabolism</keyword>
<keyword id="KW-0418">Kinase</keyword>
<keyword id="KW-0460">Magnesium</keyword>
<keyword id="KW-0479">Metal-binding</keyword>
<keyword id="KW-0547">Nucleotide-binding</keyword>
<keyword id="KW-0808">Transferase</keyword>
<organism>
    <name type="scientific">Salmonella heidelberg (strain SL476)</name>
    <dbReference type="NCBI Taxonomy" id="454169"/>
    <lineage>
        <taxon>Bacteria</taxon>
        <taxon>Pseudomonadati</taxon>
        <taxon>Pseudomonadota</taxon>
        <taxon>Gammaproteobacteria</taxon>
        <taxon>Enterobacterales</taxon>
        <taxon>Enterobacteriaceae</taxon>
        <taxon>Salmonella</taxon>
    </lineage>
</organism>
<accession>B4TC28</accession>
<sequence>MNLKEKTRALFAEIFGYPATHTIQAPGRVNLIGEHTDYNDGFVLPCAIDYQTVISCAPRDDRTVRVIAADYDNQVDEFSLDAPIVTHDSQQWSNYVRGVVKHLQQRNNAFGGVDMVISGNVPQGAGLSSSASLEVAVGTVFQQLYHLPLDGAQIALNGQEAENQFVGCNCGIMDQLISALGKKDHALLIDCRTLGAKAVSMPKGVAVVIINSNFKRTLVGSEYNTRREQCETGARFFQQPALRDVSLEAFNAVASELDPVVAKRVRHVLSENARTVEAASALEKGDLQRMGQLMAESHASMRDDFEITVPQIDTLVDIVKATIGDQGGVRMTGGGFGGCVVALIPEDLVPAVRQAVAQQYEAKTGIKETFYVCKPSQGAGQC</sequence>
<gene>
    <name evidence="1" type="primary">galK</name>
    <name type="ordered locus">SeHA_C0901</name>
</gene>
<protein>
    <recommendedName>
        <fullName evidence="1">Galactokinase</fullName>
        <ecNumber evidence="1">2.7.1.6</ecNumber>
    </recommendedName>
    <alternativeName>
        <fullName evidence="1">Galactose kinase</fullName>
    </alternativeName>
</protein>
<name>GAL1_SALHS</name>
<dbReference type="EC" id="2.7.1.6" evidence="1"/>
<dbReference type="EMBL" id="CP001120">
    <property type="protein sequence ID" value="ACF69909.1"/>
    <property type="molecule type" value="Genomic_DNA"/>
</dbReference>
<dbReference type="RefSeq" id="WP_001049365.1">
    <property type="nucleotide sequence ID" value="NC_011083.1"/>
</dbReference>
<dbReference type="SMR" id="B4TC28"/>
<dbReference type="KEGG" id="seh:SeHA_C0901"/>
<dbReference type="HOGENOM" id="CLU_017814_2_1_6"/>
<dbReference type="UniPathway" id="UPA00214"/>
<dbReference type="Proteomes" id="UP000001866">
    <property type="component" value="Chromosome"/>
</dbReference>
<dbReference type="GO" id="GO:0005829">
    <property type="term" value="C:cytosol"/>
    <property type="evidence" value="ECO:0007669"/>
    <property type="project" value="TreeGrafter"/>
</dbReference>
<dbReference type="GO" id="GO:0005524">
    <property type="term" value="F:ATP binding"/>
    <property type="evidence" value="ECO:0007669"/>
    <property type="project" value="UniProtKB-UniRule"/>
</dbReference>
<dbReference type="GO" id="GO:0004335">
    <property type="term" value="F:galactokinase activity"/>
    <property type="evidence" value="ECO:0007669"/>
    <property type="project" value="UniProtKB-UniRule"/>
</dbReference>
<dbReference type="GO" id="GO:0000287">
    <property type="term" value="F:magnesium ion binding"/>
    <property type="evidence" value="ECO:0007669"/>
    <property type="project" value="UniProtKB-UniRule"/>
</dbReference>
<dbReference type="GO" id="GO:0006012">
    <property type="term" value="P:galactose metabolic process"/>
    <property type="evidence" value="ECO:0007669"/>
    <property type="project" value="UniProtKB-UniRule"/>
</dbReference>
<dbReference type="FunFam" id="3.30.230.10:FF:000017">
    <property type="entry name" value="Galactokinase"/>
    <property type="match status" value="1"/>
</dbReference>
<dbReference type="FunFam" id="3.30.70.890:FF:000001">
    <property type="entry name" value="Galactokinase"/>
    <property type="match status" value="1"/>
</dbReference>
<dbReference type="Gene3D" id="3.30.230.10">
    <property type="match status" value="1"/>
</dbReference>
<dbReference type="Gene3D" id="3.30.70.890">
    <property type="entry name" value="GHMP kinase, C-terminal domain"/>
    <property type="match status" value="1"/>
</dbReference>
<dbReference type="HAMAP" id="MF_00246">
    <property type="entry name" value="Galactokinase"/>
    <property type="match status" value="1"/>
</dbReference>
<dbReference type="InterPro" id="IPR000705">
    <property type="entry name" value="Galactokinase"/>
</dbReference>
<dbReference type="InterPro" id="IPR022963">
    <property type="entry name" value="Galactokinase_bac"/>
</dbReference>
<dbReference type="InterPro" id="IPR019741">
    <property type="entry name" value="Galactokinase_CS"/>
</dbReference>
<dbReference type="InterPro" id="IPR019539">
    <property type="entry name" value="GalKase_N"/>
</dbReference>
<dbReference type="InterPro" id="IPR013750">
    <property type="entry name" value="GHMP_kinase_C_dom"/>
</dbReference>
<dbReference type="InterPro" id="IPR036554">
    <property type="entry name" value="GHMP_kinase_C_sf"/>
</dbReference>
<dbReference type="InterPro" id="IPR006204">
    <property type="entry name" value="GHMP_kinase_N_dom"/>
</dbReference>
<dbReference type="InterPro" id="IPR006203">
    <property type="entry name" value="GHMP_knse_ATP-bd_CS"/>
</dbReference>
<dbReference type="InterPro" id="IPR006206">
    <property type="entry name" value="Mevalonate/galactokinase"/>
</dbReference>
<dbReference type="InterPro" id="IPR020568">
    <property type="entry name" value="Ribosomal_Su5_D2-typ_SF"/>
</dbReference>
<dbReference type="InterPro" id="IPR014721">
    <property type="entry name" value="Ribsml_uS5_D2-typ_fold_subgr"/>
</dbReference>
<dbReference type="NCBIfam" id="TIGR00131">
    <property type="entry name" value="gal_kin"/>
    <property type="match status" value="1"/>
</dbReference>
<dbReference type="NCBIfam" id="NF003472">
    <property type="entry name" value="PRK05101.1"/>
    <property type="match status" value="1"/>
</dbReference>
<dbReference type="PANTHER" id="PTHR10457:SF7">
    <property type="entry name" value="GALACTOKINASE-RELATED"/>
    <property type="match status" value="1"/>
</dbReference>
<dbReference type="PANTHER" id="PTHR10457">
    <property type="entry name" value="MEVALONATE KINASE/GALACTOKINASE"/>
    <property type="match status" value="1"/>
</dbReference>
<dbReference type="Pfam" id="PF10509">
    <property type="entry name" value="GalKase_gal_bdg"/>
    <property type="match status" value="1"/>
</dbReference>
<dbReference type="Pfam" id="PF08544">
    <property type="entry name" value="GHMP_kinases_C"/>
    <property type="match status" value="1"/>
</dbReference>
<dbReference type="Pfam" id="PF00288">
    <property type="entry name" value="GHMP_kinases_N"/>
    <property type="match status" value="1"/>
</dbReference>
<dbReference type="PIRSF" id="PIRSF000530">
    <property type="entry name" value="Galactokinase"/>
    <property type="match status" value="1"/>
</dbReference>
<dbReference type="PRINTS" id="PR00473">
    <property type="entry name" value="GALCTOKINASE"/>
</dbReference>
<dbReference type="PRINTS" id="PR00959">
    <property type="entry name" value="MEVGALKINASE"/>
</dbReference>
<dbReference type="SUPFAM" id="SSF55060">
    <property type="entry name" value="GHMP Kinase, C-terminal domain"/>
    <property type="match status" value="1"/>
</dbReference>
<dbReference type="SUPFAM" id="SSF54211">
    <property type="entry name" value="Ribosomal protein S5 domain 2-like"/>
    <property type="match status" value="1"/>
</dbReference>
<dbReference type="PROSITE" id="PS00106">
    <property type="entry name" value="GALACTOKINASE"/>
    <property type="match status" value="1"/>
</dbReference>
<dbReference type="PROSITE" id="PS00627">
    <property type="entry name" value="GHMP_KINASES_ATP"/>
    <property type="match status" value="1"/>
</dbReference>
<proteinExistence type="inferred from homology"/>
<reference key="1">
    <citation type="journal article" date="2011" name="J. Bacteriol.">
        <title>Comparative genomics of 28 Salmonella enterica isolates: evidence for CRISPR-mediated adaptive sublineage evolution.</title>
        <authorList>
            <person name="Fricke W.F."/>
            <person name="Mammel M.K."/>
            <person name="McDermott P.F."/>
            <person name="Tartera C."/>
            <person name="White D.G."/>
            <person name="Leclerc J.E."/>
            <person name="Ravel J."/>
            <person name="Cebula T.A."/>
        </authorList>
    </citation>
    <scope>NUCLEOTIDE SEQUENCE [LARGE SCALE GENOMIC DNA]</scope>
    <source>
        <strain>SL476</strain>
    </source>
</reference>
<comment type="function">
    <text evidence="1">Catalyzes the transfer of the gamma-phosphate of ATP to D-galactose to form alpha-D-galactose-1-phosphate (Gal-1-P).</text>
</comment>
<comment type="catalytic activity">
    <reaction evidence="1">
        <text>alpha-D-galactose + ATP = alpha-D-galactose 1-phosphate + ADP + H(+)</text>
        <dbReference type="Rhea" id="RHEA:13553"/>
        <dbReference type="ChEBI" id="CHEBI:15378"/>
        <dbReference type="ChEBI" id="CHEBI:28061"/>
        <dbReference type="ChEBI" id="CHEBI:30616"/>
        <dbReference type="ChEBI" id="CHEBI:58336"/>
        <dbReference type="ChEBI" id="CHEBI:456216"/>
        <dbReference type="EC" id="2.7.1.6"/>
    </reaction>
</comment>
<comment type="pathway">
    <text evidence="1">Carbohydrate metabolism; galactose metabolism.</text>
</comment>
<comment type="subcellular location">
    <subcellularLocation>
        <location evidence="1">Cytoplasm</location>
    </subcellularLocation>
</comment>
<comment type="similarity">
    <text evidence="1">Belongs to the GHMP kinase family. GalK subfamily.</text>
</comment>